<sequence>MDMTSRMTSHFRDAMALCEQSMQALSEPLAGAVELLFAALANNGRILACGNGGSAADAQHFVAELVGRFERDRLPLAGIALNTDTSILTAVGNDYGFDEIYERQVNALGQPGDVLVAISTSGNSPNVVRAMEAARDREMHVIALTGKGGGVMGELITPHDVHLCVPHDRTMRIQEIHILLLHALCDGIDALLLGDTE</sequence>
<feature type="chain" id="PRO_1000009052" description="Phosphoheptose isomerase">
    <location>
        <begin position="1"/>
        <end position="197"/>
    </location>
</feature>
<feature type="domain" description="SIS" evidence="1">
    <location>
        <begin position="36"/>
        <end position="197"/>
    </location>
</feature>
<feature type="binding site" evidence="1">
    <location>
        <begin position="51"/>
        <end position="53"/>
    </location>
    <ligand>
        <name>substrate</name>
    </ligand>
</feature>
<feature type="binding site" evidence="1">
    <location>
        <position position="60"/>
    </location>
    <ligand>
        <name>Zn(2+)</name>
        <dbReference type="ChEBI" id="CHEBI:29105"/>
    </ligand>
</feature>
<feature type="binding site" evidence="1">
    <location>
        <position position="64"/>
    </location>
    <ligand>
        <name>substrate</name>
    </ligand>
</feature>
<feature type="binding site" evidence="1">
    <location>
        <position position="64"/>
    </location>
    <ligand>
        <name>Zn(2+)</name>
        <dbReference type="ChEBI" id="CHEBI:29105"/>
    </ligand>
</feature>
<feature type="binding site" evidence="1">
    <location>
        <begin position="93"/>
        <end position="94"/>
    </location>
    <ligand>
        <name>substrate</name>
    </ligand>
</feature>
<feature type="binding site" evidence="1">
    <location>
        <begin position="119"/>
        <end position="121"/>
    </location>
    <ligand>
        <name>substrate</name>
    </ligand>
</feature>
<feature type="binding site" evidence="1">
    <location>
        <position position="124"/>
    </location>
    <ligand>
        <name>substrate</name>
    </ligand>
</feature>
<feature type="binding site" evidence="1">
    <location>
        <position position="174"/>
    </location>
    <ligand>
        <name>substrate</name>
    </ligand>
</feature>
<feature type="binding site" evidence="1">
    <location>
        <position position="174"/>
    </location>
    <ligand>
        <name>Zn(2+)</name>
        <dbReference type="ChEBI" id="CHEBI:29105"/>
    </ligand>
</feature>
<feature type="binding site" evidence="1">
    <location>
        <position position="182"/>
    </location>
    <ligand>
        <name>Zn(2+)</name>
        <dbReference type="ChEBI" id="CHEBI:29105"/>
    </ligand>
</feature>
<organism>
    <name type="scientific">Bordetella avium (strain 197N)</name>
    <dbReference type="NCBI Taxonomy" id="360910"/>
    <lineage>
        <taxon>Bacteria</taxon>
        <taxon>Pseudomonadati</taxon>
        <taxon>Pseudomonadota</taxon>
        <taxon>Betaproteobacteria</taxon>
        <taxon>Burkholderiales</taxon>
        <taxon>Alcaligenaceae</taxon>
        <taxon>Bordetella</taxon>
    </lineage>
</organism>
<protein>
    <recommendedName>
        <fullName evidence="1">Phosphoheptose isomerase</fullName>
        <ecNumber evidence="1">5.3.1.28</ecNumber>
    </recommendedName>
    <alternativeName>
        <fullName evidence="1">Sedoheptulose 7-phosphate isomerase</fullName>
    </alternativeName>
</protein>
<gene>
    <name evidence="1" type="primary">gmhA</name>
    <name type="ordered locus">BAV3163</name>
</gene>
<dbReference type="EC" id="5.3.1.28" evidence="1"/>
<dbReference type="EMBL" id="AM167904">
    <property type="protein sequence ID" value="CAJ50773.1"/>
    <property type="molecule type" value="Genomic_DNA"/>
</dbReference>
<dbReference type="RefSeq" id="WP_012418801.1">
    <property type="nucleotide sequence ID" value="NC_010645.1"/>
</dbReference>
<dbReference type="SMR" id="Q2KU87"/>
<dbReference type="STRING" id="360910.BAV3163"/>
<dbReference type="GeneID" id="92933580"/>
<dbReference type="KEGG" id="bav:BAV3163"/>
<dbReference type="eggNOG" id="COG0279">
    <property type="taxonomic scope" value="Bacteria"/>
</dbReference>
<dbReference type="HOGENOM" id="CLU_080999_3_1_4"/>
<dbReference type="OrthoDB" id="9810929at2"/>
<dbReference type="UniPathway" id="UPA00041">
    <property type="reaction ID" value="UER00436"/>
</dbReference>
<dbReference type="Proteomes" id="UP000001977">
    <property type="component" value="Chromosome"/>
</dbReference>
<dbReference type="GO" id="GO:0005737">
    <property type="term" value="C:cytoplasm"/>
    <property type="evidence" value="ECO:0007669"/>
    <property type="project" value="UniProtKB-SubCell"/>
</dbReference>
<dbReference type="GO" id="GO:0097367">
    <property type="term" value="F:carbohydrate derivative binding"/>
    <property type="evidence" value="ECO:0007669"/>
    <property type="project" value="InterPro"/>
</dbReference>
<dbReference type="GO" id="GO:0008968">
    <property type="term" value="F:D-sedoheptulose 7-phosphate isomerase activity"/>
    <property type="evidence" value="ECO:0007669"/>
    <property type="project" value="UniProtKB-UniRule"/>
</dbReference>
<dbReference type="GO" id="GO:0008270">
    <property type="term" value="F:zinc ion binding"/>
    <property type="evidence" value="ECO:0007669"/>
    <property type="project" value="UniProtKB-UniRule"/>
</dbReference>
<dbReference type="GO" id="GO:0005975">
    <property type="term" value="P:carbohydrate metabolic process"/>
    <property type="evidence" value="ECO:0007669"/>
    <property type="project" value="UniProtKB-UniRule"/>
</dbReference>
<dbReference type="GO" id="GO:2001061">
    <property type="term" value="P:D-glycero-D-manno-heptose 7-phosphate biosynthetic process"/>
    <property type="evidence" value="ECO:0007669"/>
    <property type="project" value="UniProtKB-UniPathway"/>
</dbReference>
<dbReference type="CDD" id="cd05006">
    <property type="entry name" value="SIS_GmhA"/>
    <property type="match status" value="1"/>
</dbReference>
<dbReference type="Gene3D" id="3.40.50.10490">
    <property type="entry name" value="Glucose-6-phosphate isomerase like protein, domain 1"/>
    <property type="match status" value="1"/>
</dbReference>
<dbReference type="HAMAP" id="MF_00067">
    <property type="entry name" value="GmhA"/>
    <property type="match status" value="1"/>
</dbReference>
<dbReference type="InterPro" id="IPR035461">
    <property type="entry name" value="GmhA/DiaA"/>
</dbReference>
<dbReference type="InterPro" id="IPR004515">
    <property type="entry name" value="Phosphoheptose_Isoase"/>
</dbReference>
<dbReference type="InterPro" id="IPR001347">
    <property type="entry name" value="SIS_dom"/>
</dbReference>
<dbReference type="InterPro" id="IPR046348">
    <property type="entry name" value="SIS_dom_sf"/>
</dbReference>
<dbReference type="InterPro" id="IPR050099">
    <property type="entry name" value="SIS_GmhA/DiaA_subfam"/>
</dbReference>
<dbReference type="NCBIfam" id="NF010546">
    <property type="entry name" value="PRK13936.1"/>
    <property type="match status" value="1"/>
</dbReference>
<dbReference type="PANTHER" id="PTHR30390:SF6">
    <property type="entry name" value="DNAA INITIATOR-ASSOCIATING PROTEIN DIAA"/>
    <property type="match status" value="1"/>
</dbReference>
<dbReference type="PANTHER" id="PTHR30390">
    <property type="entry name" value="SEDOHEPTULOSE 7-PHOSPHATE ISOMERASE / DNAA INITIATOR-ASSOCIATING FACTOR FOR REPLICATION INITIATION"/>
    <property type="match status" value="1"/>
</dbReference>
<dbReference type="Pfam" id="PF13580">
    <property type="entry name" value="SIS_2"/>
    <property type="match status" value="1"/>
</dbReference>
<dbReference type="SUPFAM" id="SSF53697">
    <property type="entry name" value="SIS domain"/>
    <property type="match status" value="1"/>
</dbReference>
<dbReference type="PROSITE" id="PS51464">
    <property type="entry name" value="SIS"/>
    <property type="match status" value="1"/>
</dbReference>
<keyword id="KW-0119">Carbohydrate metabolism</keyword>
<keyword id="KW-0963">Cytoplasm</keyword>
<keyword id="KW-0413">Isomerase</keyword>
<keyword id="KW-0479">Metal-binding</keyword>
<keyword id="KW-1185">Reference proteome</keyword>
<keyword id="KW-0862">Zinc</keyword>
<accession>Q2KU87</accession>
<name>GMHA_BORA1</name>
<comment type="function">
    <text evidence="1">Catalyzes the isomerization of sedoheptulose 7-phosphate in D-glycero-D-manno-heptose 7-phosphate.</text>
</comment>
<comment type="catalytic activity">
    <reaction evidence="1">
        <text>2 D-sedoheptulose 7-phosphate = D-glycero-alpha-D-manno-heptose 7-phosphate + D-glycero-beta-D-manno-heptose 7-phosphate</text>
        <dbReference type="Rhea" id="RHEA:27489"/>
        <dbReference type="ChEBI" id="CHEBI:57483"/>
        <dbReference type="ChEBI" id="CHEBI:60203"/>
        <dbReference type="ChEBI" id="CHEBI:60204"/>
        <dbReference type="EC" id="5.3.1.28"/>
    </reaction>
</comment>
<comment type="cofactor">
    <cofactor evidence="1">
        <name>Zn(2+)</name>
        <dbReference type="ChEBI" id="CHEBI:29105"/>
    </cofactor>
    <text evidence="1">Binds 1 zinc ion per subunit.</text>
</comment>
<comment type="pathway">
    <text evidence="1">Carbohydrate biosynthesis; D-glycero-D-manno-heptose 7-phosphate biosynthesis; D-glycero-alpha-D-manno-heptose 7-phosphate and D-glycero-beta-D-manno-heptose 7-phosphate from sedoheptulose 7-phosphate: step 1/1.</text>
</comment>
<comment type="subunit">
    <text evidence="1">Homotetramer.</text>
</comment>
<comment type="subcellular location">
    <subcellularLocation>
        <location evidence="1">Cytoplasm</location>
    </subcellularLocation>
</comment>
<comment type="miscellaneous">
    <text evidence="1">The reaction produces a racemic mixture of D-glycero-alpha-D-manno-heptose 7-phosphate and D-glycero-beta-D-manno-heptose 7-phosphate.</text>
</comment>
<comment type="similarity">
    <text evidence="1">Belongs to the SIS family. GmhA subfamily.</text>
</comment>
<reference key="1">
    <citation type="journal article" date="2006" name="J. Bacteriol.">
        <title>Comparison of the genome sequence of the poultry pathogen Bordetella avium with those of B. bronchiseptica, B. pertussis, and B. parapertussis reveals extensive diversity in surface structures associated with host interaction.</title>
        <authorList>
            <person name="Sebaihia M."/>
            <person name="Preston A."/>
            <person name="Maskell D.J."/>
            <person name="Kuzmiak H."/>
            <person name="Connell T.D."/>
            <person name="King N.D."/>
            <person name="Orndorff P.E."/>
            <person name="Miyamoto D.M."/>
            <person name="Thomson N.R."/>
            <person name="Harris D."/>
            <person name="Goble A."/>
            <person name="Lord A."/>
            <person name="Murphy L."/>
            <person name="Quail M.A."/>
            <person name="Rutter S."/>
            <person name="Squares R."/>
            <person name="Squares S."/>
            <person name="Woodward J."/>
            <person name="Parkhill J."/>
            <person name="Temple L.M."/>
        </authorList>
    </citation>
    <scope>NUCLEOTIDE SEQUENCE [LARGE SCALE GENOMIC DNA]</scope>
    <source>
        <strain>197N</strain>
    </source>
</reference>
<proteinExistence type="inferred from homology"/>
<evidence type="ECO:0000255" key="1">
    <source>
        <dbReference type="HAMAP-Rule" id="MF_00067"/>
    </source>
</evidence>